<feature type="chain" id="PRO_0000191853" description="Transketolase">
    <location>
        <begin position="1"/>
        <end position="665"/>
    </location>
</feature>
<feature type="region of interest" description="Disordered" evidence="2">
    <location>
        <begin position="94"/>
        <end position="114"/>
    </location>
</feature>
<feature type="compositionally biased region" description="Low complexity" evidence="2">
    <location>
        <begin position="97"/>
        <end position="114"/>
    </location>
</feature>
<feature type="active site" description="Proton donor" evidence="1">
    <location>
        <position position="411"/>
    </location>
</feature>
<feature type="binding site" evidence="1">
    <location>
        <position position="26"/>
    </location>
    <ligand>
        <name>substrate</name>
    </ligand>
</feature>
<feature type="binding site" evidence="1">
    <location>
        <position position="66"/>
    </location>
    <ligand>
        <name>thiamine diphosphate</name>
        <dbReference type="ChEBI" id="CHEBI:58937"/>
    </ligand>
</feature>
<feature type="binding site" evidence="1">
    <location>
        <begin position="114"/>
        <end position="116"/>
    </location>
    <ligand>
        <name>thiamine diphosphate</name>
        <dbReference type="ChEBI" id="CHEBI:58937"/>
    </ligand>
</feature>
<feature type="binding site" evidence="1">
    <location>
        <position position="155"/>
    </location>
    <ligand>
        <name>Mg(2+)</name>
        <dbReference type="ChEBI" id="CHEBI:18420"/>
    </ligand>
</feature>
<feature type="binding site" evidence="1">
    <location>
        <position position="156"/>
    </location>
    <ligand>
        <name>thiamine diphosphate</name>
        <dbReference type="ChEBI" id="CHEBI:58937"/>
    </ligand>
</feature>
<feature type="binding site" evidence="1">
    <location>
        <position position="185"/>
    </location>
    <ligand>
        <name>Mg(2+)</name>
        <dbReference type="ChEBI" id="CHEBI:18420"/>
    </ligand>
</feature>
<feature type="binding site" evidence="1">
    <location>
        <position position="185"/>
    </location>
    <ligand>
        <name>thiamine diphosphate</name>
        <dbReference type="ChEBI" id="CHEBI:58937"/>
    </ligand>
</feature>
<feature type="binding site" evidence="1">
    <location>
        <position position="187"/>
    </location>
    <ligand>
        <name>Mg(2+)</name>
        <dbReference type="ChEBI" id="CHEBI:18420"/>
    </ligand>
</feature>
<feature type="binding site" evidence="1">
    <location>
        <position position="261"/>
    </location>
    <ligand>
        <name>substrate</name>
    </ligand>
</feature>
<feature type="binding site" evidence="1">
    <location>
        <position position="261"/>
    </location>
    <ligand>
        <name>thiamine diphosphate</name>
        <dbReference type="ChEBI" id="CHEBI:58937"/>
    </ligand>
</feature>
<feature type="binding site" evidence="1">
    <location>
        <position position="358"/>
    </location>
    <ligand>
        <name>substrate</name>
    </ligand>
</feature>
<feature type="binding site" evidence="1">
    <location>
        <position position="385"/>
    </location>
    <ligand>
        <name>substrate</name>
    </ligand>
</feature>
<feature type="binding site" evidence="1">
    <location>
        <position position="437"/>
    </location>
    <ligand>
        <name>thiamine diphosphate</name>
        <dbReference type="ChEBI" id="CHEBI:58937"/>
    </ligand>
</feature>
<feature type="binding site" evidence="1">
    <location>
        <position position="461"/>
    </location>
    <ligand>
        <name>substrate</name>
    </ligand>
</feature>
<feature type="binding site" evidence="1">
    <location>
        <position position="469"/>
    </location>
    <ligand>
        <name>substrate</name>
    </ligand>
</feature>
<feature type="binding site" evidence="1">
    <location>
        <position position="520"/>
    </location>
    <ligand>
        <name>substrate</name>
    </ligand>
</feature>
<feature type="site" description="Important for catalytic activity" evidence="1">
    <location>
        <position position="26"/>
    </location>
</feature>
<feature type="site" description="Important for catalytic activity" evidence="1">
    <location>
        <position position="261"/>
    </location>
</feature>
<sequence length="665" mass="74782">MYSRKELANAIRMLSIDAVQNAQSGHPGMPMGMADIAEVLWRSFLKHNPANPNWNDRDRFILSNGHGSMLLYSLLHLTGYNLPIEELKKFRQLNSKTPGHPETGETPGVETTTGPLGQGLANAVGMAIAERTLSSYFNRPGYDIINHYTWVFVGDGCLMEGISHEVCSLAGTLNLGKLIVFYDKNGISIDGKTAHWFTDDTAKRFESYNWHVLDNIDGHDSESIERSIKQAKLITNQPSIIICNTIIGFGSPNKSGTAESHGAPLGEVEISLIREQLKWNYPPFQIPKEIYKKWNFIEEGSKLEKKWNEKFSLYQSKYPDLSTEYLRRINKKLPVEWDRVTNNYISFLQKNRQSIASRKASQNTLEKYAMILPELIGGSADLSPSNLTMWSRCNSIKDNLSGNYIHYGVREFGMTAIANGISHHGGFIPYTATFLMFVEYARNAVRMAALMCTKHIFVYTHDSIGLGEDGPTHQPVEQLSSLRITPNIDVWRPSDQVETAVAWKKAIEKTSGPTALILSRQNLDQFERSSEQLENISYGAYILYDSKKRLDIIFISTGSELNVTLIAAKKLASLGYSVRVVSMPCTSVFDRQDASYKEFVLPTYVAKRVAVEASIEDFWYKYVGINGVIIGMKTFGESAPAEDLFKKFGFTVQNIFNKSLILLKS</sequence>
<evidence type="ECO:0000250" key="1"/>
<evidence type="ECO:0000256" key="2">
    <source>
        <dbReference type="SAM" id="MobiDB-lite"/>
    </source>
</evidence>
<evidence type="ECO:0000305" key="3"/>
<accession>P57195</accession>
<keyword id="KW-0106">Calcium</keyword>
<keyword id="KW-0460">Magnesium</keyword>
<keyword id="KW-0479">Metal-binding</keyword>
<keyword id="KW-1185">Reference proteome</keyword>
<keyword id="KW-0786">Thiamine pyrophosphate</keyword>
<keyword id="KW-0808">Transferase</keyword>
<organism>
    <name type="scientific">Buchnera aphidicola subsp. Acyrthosiphon pisum (strain APS)</name>
    <name type="common">Acyrthosiphon pisum symbiotic bacterium</name>
    <dbReference type="NCBI Taxonomy" id="107806"/>
    <lineage>
        <taxon>Bacteria</taxon>
        <taxon>Pseudomonadati</taxon>
        <taxon>Pseudomonadota</taxon>
        <taxon>Gammaproteobacteria</taxon>
        <taxon>Enterobacterales</taxon>
        <taxon>Erwiniaceae</taxon>
        <taxon>Buchnera</taxon>
    </lineage>
</organism>
<proteinExistence type="inferred from homology"/>
<gene>
    <name type="primary">tkt</name>
    <name type="ordered locus">BU094</name>
</gene>
<protein>
    <recommendedName>
        <fullName>Transketolase</fullName>
        <shortName>TK</shortName>
        <ecNumber>2.2.1.1</ecNumber>
    </recommendedName>
</protein>
<comment type="function">
    <text evidence="1">Catalyzes the transfer of a two-carbon ketol group from a ketose donor to an aldose acceptor, via a covalent intermediate with the cofactor thiamine pyrophosphate.</text>
</comment>
<comment type="catalytic activity">
    <reaction>
        <text>D-sedoheptulose 7-phosphate + D-glyceraldehyde 3-phosphate = aldehydo-D-ribose 5-phosphate + D-xylulose 5-phosphate</text>
        <dbReference type="Rhea" id="RHEA:10508"/>
        <dbReference type="ChEBI" id="CHEBI:57483"/>
        <dbReference type="ChEBI" id="CHEBI:57737"/>
        <dbReference type="ChEBI" id="CHEBI:58273"/>
        <dbReference type="ChEBI" id="CHEBI:59776"/>
        <dbReference type="EC" id="2.2.1.1"/>
    </reaction>
</comment>
<comment type="cofactor">
    <cofactor evidence="1">
        <name>Mg(2+)</name>
        <dbReference type="ChEBI" id="CHEBI:18420"/>
    </cofactor>
    <cofactor evidence="1">
        <name>Ca(2+)</name>
        <dbReference type="ChEBI" id="CHEBI:29108"/>
    </cofactor>
    <cofactor evidence="1">
        <name>Mn(2+)</name>
        <dbReference type="ChEBI" id="CHEBI:29035"/>
    </cofactor>
    <cofactor evidence="1">
        <name>Co(2+)</name>
        <dbReference type="ChEBI" id="CHEBI:48828"/>
    </cofactor>
    <text evidence="1">Binds 1 Mg(2+) ion per subunit. Can also utilize other divalent metal cations, such as Ca(2+), Mn(2+) and Co(2+).</text>
</comment>
<comment type="cofactor">
    <cofactor evidence="1">
        <name>thiamine diphosphate</name>
        <dbReference type="ChEBI" id="CHEBI:58937"/>
    </cofactor>
    <text evidence="1">Binds 1 thiamine pyrophosphate per subunit.</text>
</comment>
<comment type="subunit">
    <text evidence="1">Homodimer.</text>
</comment>
<comment type="similarity">
    <text evidence="3">Belongs to the transketolase family.</text>
</comment>
<name>TKT_BUCAI</name>
<reference key="1">
    <citation type="journal article" date="2000" name="Nature">
        <title>Genome sequence of the endocellular bacterial symbiont of aphids Buchnera sp. APS.</title>
        <authorList>
            <person name="Shigenobu S."/>
            <person name="Watanabe H."/>
            <person name="Hattori M."/>
            <person name="Sakaki Y."/>
            <person name="Ishikawa H."/>
        </authorList>
    </citation>
    <scope>NUCLEOTIDE SEQUENCE [LARGE SCALE GENOMIC DNA]</scope>
    <source>
        <strain>APS</strain>
    </source>
</reference>
<dbReference type="EC" id="2.2.1.1"/>
<dbReference type="EMBL" id="BA000003">
    <property type="protein sequence ID" value="BAB12813.1"/>
    <property type="molecule type" value="Genomic_DNA"/>
</dbReference>
<dbReference type="RefSeq" id="NP_239927.1">
    <property type="nucleotide sequence ID" value="NC_002528.1"/>
</dbReference>
<dbReference type="RefSeq" id="WP_010895941.1">
    <property type="nucleotide sequence ID" value="NZ_AP036055.1"/>
</dbReference>
<dbReference type="SMR" id="P57195"/>
<dbReference type="STRING" id="563178.BUAP5A_092"/>
<dbReference type="EnsemblBacteria" id="BAB12813">
    <property type="protein sequence ID" value="BAB12813"/>
    <property type="gene ID" value="BAB12813"/>
</dbReference>
<dbReference type="KEGG" id="buc:BU094"/>
<dbReference type="PATRIC" id="fig|107806.10.peg.101"/>
<dbReference type="eggNOG" id="COG0021">
    <property type="taxonomic scope" value="Bacteria"/>
</dbReference>
<dbReference type="HOGENOM" id="CLU_009227_0_0_6"/>
<dbReference type="Proteomes" id="UP000001806">
    <property type="component" value="Chromosome"/>
</dbReference>
<dbReference type="GO" id="GO:0005829">
    <property type="term" value="C:cytosol"/>
    <property type="evidence" value="ECO:0007669"/>
    <property type="project" value="TreeGrafter"/>
</dbReference>
<dbReference type="GO" id="GO:0046872">
    <property type="term" value="F:metal ion binding"/>
    <property type="evidence" value="ECO:0007669"/>
    <property type="project" value="UniProtKB-KW"/>
</dbReference>
<dbReference type="GO" id="GO:0004802">
    <property type="term" value="F:transketolase activity"/>
    <property type="evidence" value="ECO:0007669"/>
    <property type="project" value="UniProtKB-EC"/>
</dbReference>
<dbReference type="GO" id="GO:0006098">
    <property type="term" value="P:pentose-phosphate shunt"/>
    <property type="evidence" value="ECO:0007669"/>
    <property type="project" value="TreeGrafter"/>
</dbReference>
<dbReference type="CDD" id="cd07033">
    <property type="entry name" value="TPP_PYR_DXS_TK_like"/>
    <property type="match status" value="1"/>
</dbReference>
<dbReference type="CDD" id="cd02012">
    <property type="entry name" value="TPP_TK"/>
    <property type="match status" value="1"/>
</dbReference>
<dbReference type="FunFam" id="3.40.50.920:FF:000003">
    <property type="entry name" value="Transketolase"/>
    <property type="match status" value="1"/>
</dbReference>
<dbReference type="FunFam" id="3.40.50.970:FF:000003">
    <property type="entry name" value="Transketolase"/>
    <property type="match status" value="1"/>
</dbReference>
<dbReference type="FunFam" id="3.40.50.970:FF:000004">
    <property type="entry name" value="Transketolase"/>
    <property type="match status" value="1"/>
</dbReference>
<dbReference type="Gene3D" id="3.40.50.920">
    <property type="match status" value="1"/>
</dbReference>
<dbReference type="Gene3D" id="3.40.50.970">
    <property type="match status" value="2"/>
</dbReference>
<dbReference type="InterPro" id="IPR029061">
    <property type="entry name" value="THDP-binding"/>
</dbReference>
<dbReference type="InterPro" id="IPR009014">
    <property type="entry name" value="Transketo_C/PFOR_II"/>
</dbReference>
<dbReference type="InterPro" id="IPR055152">
    <property type="entry name" value="Transketolase-like_C_2"/>
</dbReference>
<dbReference type="InterPro" id="IPR005475">
    <property type="entry name" value="Transketolase-like_Pyr-bd"/>
</dbReference>
<dbReference type="InterPro" id="IPR005478">
    <property type="entry name" value="Transketolase_bac-like"/>
</dbReference>
<dbReference type="InterPro" id="IPR020826">
    <property type="entry name" value="Transketolase_BS"/>
</dbReference>
<dbReference type="InterPro" id="IPR049557">
    <property type="entry name" value="Transketolase_CS"/>
</dbReference>
<dbReference type="InterPro" id="IPR033247">
    <property type="entry name" value="Transketolase_fam"/>
</dbReference>
<dbReference type="InterPro" id="IPR005474">
    <property type="entry name" value="Transketolase_N"/>
</dbReference>
<dbReference type="NCBIfam" id="TIGR00232">
    <property type="entry name" value="tktlase_bact"/>
    <property type="match status" value="1"/>
</dbReference>
<dbReference type="PANTHER" id="PTHR43522">
    <property type="entry name" value="TRANSKETOLASE"/>
    <property type="match status" value="1"/>
</dbReference>
<dbReference type="PANTHER" id="PTHR43522:SF13">
    <property type="entry name" value="TRANSKETOLASE 2"/>
    <property type="match status" value="1"/>
</dbReference>
<dbReference type="Pfam" id="PF02779">
    <property type="entry name" value="Transket_pyr"/>
    <property type="match status" value="1"/>
</dbReference>
<dbReference type="Pfam" id="PF22613">
    <property type="entry name" value="Transketolase_C_1"/>
    <property type="match status" value="1"/>
</dbReference>
<dbReference type="Pfam" id="PF00456">
    <property type="entry name" value="Transketolase_N"/>
    <property type="match status" value="1"/>
</dbReference>
<dbReference type="SMART" id="SM00861">
    <property type="entry name" value="Transket_pyr"/>
    <property type="match status" value="1"/>
</dbReference>
<dbReference type="SUPFAM" id="SSF52518">
    <property type="entry name" value="Thiamin diphosphate-binding fold (THDP-binding)"/>
    <property type="match status" value="2"/>
</dbReference>
<dbReference type="SUPFAM" id="SSF52922">
    <property type="entry name" value="TK C-terminal domain-like"/>
    <property type="match status" value="1"/>
</dbReference>
<dbReference type="PROSITE" id="PS00801">
    <property type="entry name" value="TRANSKETOLASE_1"/>
    <property type="match status" value="1"/>
</dbReference>
<dbReference type="PROSITE" id="PS00802">
    <property type="entry name" value="TRANSKETOLASE_2"/>
    <property type="match status" value="1"/>
</dbReference>